<comment type="catalytic activity">
    <reaction evidence="2">
        <text>(S)-malate + NAD(+) = oxaloacetate + NADH + H(+)</text>
        <dbReference type="Rhea" id="RHEA:21432"/>
        <dbReference type="ChEBI" id="CHEBI:15378"/>
        <dbReference type="ChEBI" id="CHEBI:15589"/>
        <dbReference type="ChEBI" id="CHEBI:16452"/>
        <dbReference type="ChEBI" id="CHEBI:57540"/>
        <dbReference type="ChEBI" id="CHEBI:57945"/>
        <dbReference type="EC" id="1.1.1.37"/>
    </reaction>
</comment>
<comment type="subunit">
    <text>Homodimer.</text>
</comment>
<comment type="subcellular location">
    <subcellularLocation>
        <location>Mitochondrion matrix</location>
    </subcellularLocation>
</comment>
<comment type="allergen">
    <text evidence="3">Causes an allergic reaction in human. Binds to IgE in 96% of the 23 patients tested with oral allergy symptoms and pollen allergy to watermelon. IgE-binding is lost by digestion with pepsin.</text>
</comment>
<comment type="similarity">
    <text evidence="4">Belongs to the LDH/MDH superfamily. MDH type 1 family.</text>
</comment>
<reference key="1">
    <citation type="journal article" date="1990" name="Plant Mol. Biol.">
        <title>Mitochondrial malate dehydrogenase from watermelon: sequence of cDNA clones and primary structure of the higher-plant precursor protein.</title>
        <authorList>
            <person name="Gietl C."/>
            <person name="Lehnerer M."/>
            <person name="Olsen O."/>
        </authorList>
    </citation>
    <scope>NUCLEOTIDE SEQUENCE [MRNA]</scope>
    <scope>PARTIAL PROTEIN SEQUENCE</scope>
    <source>
        <strain>cv. Sugar Baby</strain>
        <tissue>Cotyledon</tissue>
    </source>
</reference>
<reference key="2">
    <citation type="journal article" date="1986" name="Planta">
        <title>Sequence homologies between glyoxysomal and mitochondrial malate dehydrogenase.</title>
        <authorList>
            <person name="Gietl C."/>
            <person name="Lottspeich F."/>
            <person name="Hock B."/>
        </authorList>
    </citation>
    <scope>PROTEIN SEQUENCE OF 28-55</scope>
</reference>
<reference key="3">
    <citation type="journal article" date="2009" name="Int. Arch. Allergy Immunol.">
        <title>Identification of major allergens in watermelon.</title>
        <authorList>
            <person name="Pastor C."/>
            <person name="Cuesta-Herranz J."/>
            <person name="Cases B."/>
            <person name="Perez-Gordo M."/>
            <person name="Figueredo E."/>
            <person name="de las Heras M."/>
            <person name="Vivanco F."/>
        </authorList>
    </citation>
    <scope>PROTEIN SEQUENCE OF 28-34</scope>
    <scope>IDENTIFICATION BY MASS SPECTROMETRY</scope>
    <scope>ALLERGEN</scope>
</reference>
<organism>
    <name type="scientific">Citrullus lanatus</name>
    <name type="common">Watermelon</name>
    <name type="synonym">Citrullus vulgaris</name>
    <dbReference type="NCBI Taxonomy" id="3654"/>
    <lineage>
        <taxon>Eukaryota</taxon>
        <taxon>Viridiplantae</taxon>
        <taxon>Streptophyta</taxon>
        <taxon>Embryophyta</taxon>
        <taxon>Tracheophyta</taxon>
        <taxon>Spermatophyta</taxon>
        <taxon>Magnoliopsida</taxon>
        <taxon>eudicotyledons</taxon>
        <taxon>Gunneridae</taxon>
        <taxon>Pentapetalae</taxon>
        <taxon>rosids</taxon>
        <taxon>fabids</taxon>
        <taxon>Cucurbitales</taxon>
        <taxon>Cucurbitaceae</taxon>
        <taxon>Benincaseae</taxon>
        <taxon>Citrullus</taxon>
    </lineage>
</organism>
<keyword id="KW-0020">Allergen</keyword>
<keyword id="KW-0903">Direct protein sequencing</keyword>
<keyword id="KW-0496">Mitochondrion</keyword>
<keyword id="KW-0520">NAD</keyword>
<keyword id="KW-0560">Oxidoreductase</keyword>
<keyword id="KW-0809">Transit peptide</keyword>
<keyword id="KW-0816">Tricarboxylic acid cycle</keyword>
<sequence length="347" mass="36201">MKASILRSVRSAVSRSSSSNRLLSRSFATESVPERKVAVLGAAGGIGQPLALLMKLNPLVSKLALYDIAGTPGVAADVGHVNTRSEVTGYVGEEQLGKALEGSDVVIIPAGVPRKPGMTRDDLFNINAGIVKSLCTAIAKYCPNALINMISNPVNSTVPIAAEVFKKAGTYDEKKLFGVTTLDVVRAKTFYAGKANVPVAEVNVPVIGGHAGITILPLFSQATPRANLSDDTIVALTKRTQDGGTEVVEAKAGKGSATLSMAYAGALFADACLKGLNGVPDVVECSFVQSTVTELPFFASKVKLGKNGVESVLDLGPLSDFEKEGLEKLKPELKASIEKGIQFANAN</sequence>
<evidence type="ECO:0000250" key="1"/>
<evidence type="ECO:0000255" key="2">
    <source>
        <dbReference type="PROSITE-ProRule" id="PRU10004"/>
    </source>
</evidence>
<evidence type="ECO:0000269" key="3">
    <source>
    </source>
</evidence>
<evidence type="ECO:0000305" key="4"/>
<evidence type="ECO:0000305" key="5">
    <source>
    </source>
</evidence>
<evidence type="ECO:0000305" key="6">
    <source ref="2"/>
</evidence>
<name>MDHM_CITLA</name>
<dbReference type="EC" id="1.1.1.37"/>
<dbReference type="EMBL" id="X17362">
    <property type="protein sequence ID" value="CAA35239.1"/>
    <property type="molecule type" value="mRNA"/>
</dbReference>
<dbReference type="PIR" id="S10162">
    <property type="entry name" value="DEPUMW"/>
</dbReference>
<dbReference type="SMR" id="P17783"/>
<dbReference type="Allergome" id="6159">
    <property type="allergen name" value="Citr l MDH"/>
</dbReference>
<dbReference type="EnsemblPlants" id="Cla97C07G136660.1">
    <property type="protein sequence ID" value="Cla97C07G136660.1"/>
    <property type="gene ID" value="Cla97C07G136660"/>
</dbReference>
<dbReference type="Gramene" id="Cla97C07G136660.1">
    <property type="protein sequence ID" value="Cla97C07G136660.1"/>
    <property type="gene ID" value="Cla97C07G136660"/>
</dbReference>
<dbReference type="GO" id="GO:0005759">
    <property type="term" value="C:mitochondrial matrix"/>
    <property type="evidence" value="ECO:0007669"/>
    <property type="project" value="UniProtKB-SubCell"/>
</dbReference>
<dbReference type="GO" id="GO:0030060">
    <property type="term" value="F:L-malate dehydrogenase (NAD+) activity"/>
    <property type="evidence" value="ECO:0007669"/>
    <property type="project" value="UniProtKB-EC"/>
</dbReference>
<dbReference type="GO" id="GO:0006108">
    <property type="term" value="P:malate metabolic process"/>
    <property type="evidence" value="ECO:0007669"/>
    <property type="project" value="InterPro"/>
</dbReference>
<dbReference type="GO" id="GO:0006099">
    <property type="term" value="P:tricarboxylic acid cycle"/>
    <property type="evidence" value="ECO:0007669"/>
    <property type="project" value="UniProtKB-KW"/>
</dbReference>
<dbReference type="CDD" id="cd01337">
    <property type="entry name" value="MDH_glyoxysomal_mitochondrial"/>
    <property type="match status" value="1"/>
</dbReference>
<dbReference type="FunFam" id="3.40.50.720:FF:000013">
    <property type="entry name" value="Malate dehydrogenase"/>
    <property type="match status" value="1"/>
</dbReference>
<dbReference type="FunFam" id="3.90.110.10:FF:000001">
    <property type="entry name" value="Malate dehydrogenase"/>
    <property type="match status" value="1"/>
</dbReference>
<dbReference type="Gene3D" id="3.90.110.10">
    <property type="entry name" value="Lactate dehydrogenase/glycoside hydrolase, family 4, C-terminal"/>
    <property type="match status" value="1"/>
</dbReference>
<dbReference type="Gene3D" id="3.40.50.720">
    <property type="entry name" value="NAD(P)-binding Rossmann-like Domain"/>
    <property type="match status" value="1"/>
</dbReference>
<dbReference type="InterPro" id="IPR001557">
    <property type="entry name" value="L-lactate/malate_DH"/>
</dbReference>
<dbReference type="InterPro" id="IPR022383">
    <property type="entry name" value="Lactate/malate_DH_C"/>
</dbReference>
<dbReference type="InterPro" id="IPR001236">
    <property type="entry name" value="Lactate/malate_DH_N"/>
</dbReference>
<dbReference type="InterPro" id="IPR015955">
    <property type="entry name" value="Lactate_DH/Glyco_Ohase_4_C"/>
</dbReference>
<dbReference type="InterPro" id="IPR001252">
    <property type="entry name" value="Malate_DH_AS"/>
</dbReference>
<dbReference type="InterPro" id="IPR010097">
    <property type="entry name" value="Malate_DH_type1"/>
</dbReference>
<dbReference type="InterPro" id="IPR036291">
    <property type="entry name" value="NAD(P)-bd_dom_sf"/>
</dbReference>
<dbReference type="NCBIfam" id="TIGR01772">
    <property type="entry name" value="MDH_euk_gproteo"/>
    <property type="match status" value="1"/>
</dbReference>
<dbReference type="PANTHER" id="PTHR11540">
    <property type="entry name" value="MALATE AND LACTATE DEHYDROGENASE"/>
    <property type="match status" value="1"/>
</dbReference>
<dbReference type="PANTHER" id="PTHR11540:SF58">
    <property type="entry name" value="MALATE DEHYDROGENASE 1, MITOCHONDRIAL-RELATED"/>
    <property type="match status" value="1"/>
</dbReference>
<dbReference type="Pfam" id="PF02866">
    <property type="entry name" value="Ldh_1_C"/>
    <property type="match status" value="1"/>
</dbReference>
<dbReference type="Pfam" id="PF00056">
    <property type="entry name" value="Ldh_1_N"/>
    <property type="match status" value="1"/>
</dbReference>
<dbReference type="PIRSF" id="PIRSF000102">
    <property type="entry name" value="Lac_mal_DH"/>
    <property type="match status" value="1"/>
</dbReference>
<dbReference type="SUPFAM" id="SSF56327">
    <property type="entry name" value="LDH C-terminal domain-like"/>
    <property type="match status" value="1"/>
</dbReference>
<dbReference type="SUPFAM" id="SSF51735">
    <property type="entry name" value="NAD(P)-binding Rossmann-fold domains"/>
    <property type="match status" value="1"/>
</dbReference>
<dbReference type="PROSITE" id="PS00068">
    <property type="entry name" value="MDH"/>
    <property type="match status" value="1"/>
</dbReference>
<accession>P17783</accession>
<feature type="transit peptide" description="Mitochondrion" evidence="5 6">
    <location>
        <begin position="1"/>
        <end position="27"/>
    </location>
</feature>
<feature type="chain" id="PRO_0000018625" description="Malate dehydrogenase, mitochondrial" evidence="5 6">
    <location>
        <begin position="28"/>
        <end position="347"/>
    </location>
</feature>
<feature type="active site" description="Proton acceptor" evidence="1">
    <location>
        <position position="210"/>
    </location>
</feature>
<feature type="binding site" evidence="1">
    <location>
        <begin position="41"/>
        <end position="47"/>
    </location>
    <ligand>
        <name>NAD(+)</name>
        <dbReference type="ChEBI" id="CHEBI:57540"/>
    </ligand>
</feature>
<feature type="binding site" evidence="1">
    <location>
        <position position="67"/>
    </location>
    <ligand>
        <name>NAD(+)</name>
        <dbReference type="ChEBI" id="CHEBI:57540"/>
    </ligand>
</feature>
<feature type="binding site" evidence="2">
    <location>
        <position position="114"/>
    </location>
    <ligand>
        <name>substrate</name>
    </ligand>
</feature>
<feature type="binding site" evidence="2">
    <location>
        <position position="120"/>
    </location>
    <ligand>
        <name>substrate</name>
    </ligand>
</feature>
<feature type="binding site" evidence="1">
    <location>
        <position position="127"/>
    </location>
    <ligand>
        <name>NAD(+)</name>
        <dbReference type="ChEBI" id="CHEBI:57540"/>
    </ligand>
</feature>
<feature type="binding site" evidence="1">
    <location>
        <begin position="150"/>
        <end position="152"/>
    </location>
    <ligand>
        <name>NAD(+)</name>
        <dbReference type="ChEBI" id="CHEBI:57540"/>
    </ligand>
</feature>
<feature type="binding site" evidence="2">
    <location>
        <position position="152"/>
    </location>
    <ligand>
        <name>substrate</name>
    </ligand>
</feature>
<feature type="binding site" evidence="2">
    <location>
        <position position="186"/>
    </location>
    <ligand>
        <name>substrate</name>
    </ligand>
</feature>
<feature type="binding site" evidence="1">
    <location>
        <position position="261"/>
    </location>
    <ligand>
        <name>NAD(+)</name>
        <dbReference type="ChEBI" id="CHEBI:57540"/>
    </ligand>
</feature>
<gene>
    <name type="primary">MMDH</name>
</gene>
<proteinExistence type="evidence at protein level"/>
<protein>
    <recommendedName>
        <fullName>Malate dehydrogenase, mitochondrial</fullName>
        <ecNumber>1.1.1.37</ecNumber>
    </recommendedName>
    <allergenName evidence="4">Citr l MDH</allergenName>
</protein>